<accession>Q9PU20</accession>
<sequence length="302" mass="32749">MFDQATSMGDGVSEERSPLCGKSATSCSERVRDKGTRADLECSLRGHSLKDIPVTSTSSPGSSKEEVQDSQSTGEADYCRRILVRDAKGTIREIVLPKGLDLDRPKRTRTSFTAEQLYRLELEFQRCQYVVGRERTELARQLNLSETQVKVWFQNRRTKQKKDQSRDSEKRSSSTSESFATCNILRLLEQGRLLSVPAPPNLISSSQNNMGTSSGNGTNLGTSGSTSPIISTTPPGAGAFSLQVPSLAASSSPRLPTSLCFPGPLLGGLHEIPSGYGLGSSAFEPYTRLDRKDTASSKKSTS</sequence>
<proteinExistence type="evidence at transcript level"/>
<comment type="function">
    <text evidence="3 5">Transcription factor that may function in dorsoventral specification of the forebrain. Regulates the expression of Wnt signaling antagonists including the expression of a truncated tcf7l2 isoform that cannot bind ctnnb1 and acts therefore as a potent dominant-negative Wnt antagonist. Plays a crucial role in eye development and, in particular, in the specification of the ventral optic vesicle. May be a regulator of axial polarization in the retina.</text>
</comment>
<comment type="subcellular location">
    <subcellularLocation>
        <location evidence="1">Nucleus</location>
    </subcellularLocation>
</comment>
<comment type="developmental stage">
    <text evidence="3 4">Expression begins at early neurula stage in the anterior neural plate whereas, at late neurula stage detected in the area which gives rise to ventral telencephalic and diencephalic regions and the eye. After neural tube closure and evagination of the optic vesicles at the early tail-bud stage, expression is specifically restricted to anterior and ventral neural structures, namely the ventral part of the optic vesicles and the ventral regions of the forebrain vesicle. This expression pattern is maintained during subsequent developmental stages. In tadpole embryos, specifically expressed in the ventral regions of both telencephalon and diencephalon.</text>
</comment>
<comment type="similarity">
    <text evidence="6">Belongs to the EMX homeobox family.</text>
</comment>
<feature type="chain" id="PRO_0000240530" description="Ventral anterior homeobox 2a">
    <location>
        <begin position="1"/>
        <end position="302"/>
    </location>
</feature>
<feature type="DNA-binding region" description="Homeobox" evidence="1">
    <location>
        <begin position="105"/>
        <end position="164"/>
    </location>
</feature>
<feature type="region of interest" description="Disordered" evidence="2">
    <location>
        <begin position="1"/>
        <end position="35"/>
    </location>
</feature>
<feature type="region of interest" description="Disordered" evidence="2">
    <location>
        <begin position="50"/>
        <end position="73"/>
    </location>
</feature>
<feature type="region of interest" description="Disordered" evidence="2">
    <location>
        <begin position="156"/>
        <end position="175"/>
    </location>
</feature>
<feature type="region of interest" description="Disordered" evidence="2">
    <location>
        <begin position="199"/>
        <end position="223"/>
    </location>
</feature>
<feature type="region of interest" description="Disordered" evidence="2">
    <location>
        <begin position="282"/>
        <end position="302"/>
    </location>
</feature>
<feature type="compositionally biased region" description="Basic and acidic residues" evidence="2">
    <location>
        <begin position="161"/>
        <end position="172"/>
    </location>
</feature>
<feature type="compositionally biased region" description="Low complexity" evidence="2">
    <location>
        <begin position="204"/>
        <end position="223"/>
    </location>
</feature>
<feature type="compositionally biased region" description="Basic and acidic residues" evidence="2">
    <location>
        <begin position="287"/>
        <end position="296"/>
    </location>
</feature>
<reference key="1">
    <citation type="journal article" date="1999" name="Proc. Natl. Acad. Sci. U.S.A.">
        <title>A homeobox gene, vax2, controls the patterning of the eye dorsoventral axis.</title>
        <authorList>
            <person name="Barbieri A.M."/>
            <person name="Lupo G."/>
            <person name="Bulfone A."/>
            <person name="Andreazzoli M."/>
            <person name="Mariani M."/>
            <person name="Fougerousse F."/>
            <person name="Consalez G.G."/>
            <person name="Borsani G."/>
            <person name="Beckmann J.S."/>
            <person name="Barsacchi G."/>
            <person name="Ballabio A."/>
            <person name="Banfi S."/>
        </authorList>
    </citation>
    <scope>NUCLEOTIDE SEQUENCE [MRNA]</scope>
    <scope>FUNCTION</scope>
    <scope>DEVELOPMENTAL STAGE</scope>
</reference>
<reference key="2">
    <citation type="journal article" date="2001" name="Mech. Dev.">
        <title>Expression of the Xvax2 gene demarcates presumptive ventral telencephalon and specific visual structures in Xenopus laevis.</title>
        <authorList>
            <person name="Liu Y."/>
            <person name="Lupo G."/>
            <person name="Marchitiello A."/>
            <person name="Gestri G."/>
            <person name="He R.-Q."/>
            <person name="Banfi S."/>
            <person name="Barsacchi G."/>
        </authorList>
    </citation>
    <scope>DEVELOPMENTAL STAGE</scope>
</reference>
<reference key="3">
    <citation type="journal article" date="2011" name="Genes Dev.">
        <title>A novel mechanism for the transcriptional regulation of Wnt signaling in development.</title>
        <authorList>
            <person name="Vacik T."/>
            <person name="Stubbs J.L."/>
            <person name="Lemke G."/>
        </authorList>
    </citation>
    <scope>FUNCTION</scope>
</reference>
<name>VAX2A_XENLA</name>
<protein>
    <recommendedName>
        <fullName>Ventral anterior homeobox 2a</fullName>
    </recommendedName>
    <alternativeName>
        <fullName>Xvax2</fullName>
    </alternativeName>
</protein>
<evidence type="ECO:0000255" key="1">
    <source>
        <dbReference type="PROSITE-ProRule" id="PRU00108"/>
    </source>
</evidence>
<evidence type="ECO:0000256" key="2">
    <source>
        <dbReference type="SAM" id="MobiDB-lite"/>
    </source>
</evidence>
<evidence type="ECO:0000269" key="3">
    <source>
    </source>
</evidence>
<evidence type="ECO:0000269" key="4">
    <source>
    </source>
</evidence>
<evidence type="ECO:0000269" key="5">
    <source>
    </source>
</evidence>
<evidence type="ECO:0000305" key="6"/>
<gene>
    <name type="primary">vax2-a</name>
    <name type="synonym">vax2</name>
</gene>
<organism>
    <name type="scientific">Xenopus laevis</name>
    <name type="common">African clawed frog</name>
    <dbReference type="NCBI Taxonomy" id="8355"/>
    <lineage>
        <taxon>Eukaryota</taxon>
        <taxon>Metazoa</taxon>
        <taxon>Chordata</taxon>
        <taxon>Craniata</taxon>
        <taxon>Vertebrata</taxon>
        <taxon>Euteleostomi</taxon>
        <taxon>Amphibia</taxon>
        <taxon>Batrachia</taxon>
        <taxon>Anura</taxon>
        <taxon>Pipoidea</taxon>
        <taxon>Pipidae</taxon>
        <taxon>Xenopodinae</taxon>
        <taxon>Xenopus</taxon>
        <taxon>Xenopus</taxon>
    </lineage>
</organism>
<dbReference type="EMBL" id="AJ238649">
    <property type="protein sequence ID" value="CAB58181.1"/>
    <property type="molecule type" value="mRNA"/>
</dbReference>
<dbReference type="RefSeq" id="NP_001081712.1">
    <property type="nucleotide sequence ID" value="NM_001088243.1"/>
</dbReference>
<dbReference type="RefSeq" id="XP_018088768.1">
    <property type="nucleotide sequence ID" value="XM_018233279.1"/>
</dbReference>
<dbReference type="SMR" id="Q9PU20"/>
<dbReference type="GeneID" id="398011"/>
<dbReference type="KEGG" id="xla:398011"/>
<dbReference type="AGR" id="Xenbase:XB-GENE-492927"/>
<dbReference type="CTD" id="398011"/>
<dbReference type="Xenbase" id="XB-GENE-492927">
    <property type="gene designation" value="vax2.L"/>
</dbReference>
<dbReference type="OMA" id="CHTELGG"/>
<dbReference type="OrthoDB" id="6159439at2759"/>
<dbReference type="Proteomes" id="UP000186698">
    <property type="component" value="Chromosome 1L"/>
</dbReference>
<dbReference type="Bgee" id="398011">
    <property type="expression patterns" value="Expressed in camera-type eye and 2 other cell types or tissues"/>
</dbReference>
<dbReference type="GO" id="GO:0005634">
    <property type="term" value="C:nucleus"/>
    <property type="evidence" value="ECO:0000318"/>
    <property type="project" value="GO_Central"/>
</dbReference>
<dbReference type="GO" id="GO:0000981">
    <property type="term" value="F:DNA-binding transcription factor activity, RNA polymerase II-specific"/>
    <property type="evidence" value="ECO:0000318"/>
    <property type="project" value="GO_Central"/>
</dbReference>
<dbReference type="GO" id="GO:0000978">
    <property type="term" value="F:RNA polymerase II cis-regulatory region sequence-specific DNA binding"/>
    <property type="evidence" value="ECO:0000318"/>
    <property type="project" value="GO_Central"/>
</dbReference>
<dbReference type="GO" id="GO:0007420">
    <property type="term" value="P:brain development"/>
    <property type="evidence" value="ECO:0000318"/>
    <property type="project" value="GO_Central"/>
</dbReference>
<dbReference type="GO" id="GO:0007417">
    <property type="term" value="P:central nervous system development"/>
    <property type="evidence" value="ECO:0000318"/>
    <property type="project" value="GO_Central"/>
</dbReference>
<dbReference type="GO" id="GO:0030900">
    <property type="term" value="P:forebrain development"/>
    <property type="evidence" value="ECO:0000250"/>
    <property type="project" value="UniProtKB"/>
</dbReference>
<dbReference type="GO" id="GO:0060322">
    <property type="term" value="P:head development"/>
    <property type="evidence" value="ECO:0000315"/>
    <property type="project" value="UniProtKB"/>
</dbReference>
<dbReference type="GO" id="GO:0030182">
    <property type="term" value="P:neuron differentiation"/>
    <property type="evidence" value="ECO:0000318"/>
    <property type="project" value="GO_Central"/>
</dbReference>
<dbReference type="GO" id="GO:0006357">
    <property type="term" value="P:regulation of transcription by RNA polymerase II"/>
    <property type="evidence" value="ECO:0000318"/>
    <property type="project" value="GO_Central"/>
</dbReference>
<dbReference type="GO" id="GO:0016055">
    <property type="term" value="P:Wnt signaling pathway"/>
    <property type="evidence" value="ECO:0007669"/>
    <property type="project" value="UniProtKB-KW"/>
</dbReference>
<dbReference type="CDD" id="cd00086">
    <property type="entry name" value="homeodomain"/>
    <property type="match status" value="1"/>
</dbReference>
<dbReference type="FunFam" id="1.10.10.60:FF:000131">
    <property type="entry name" value="Ventral anterior homeobox 2"/>
    <property type="match status" value="1"/>
</dbReference>
<dbReference type="Gene3D" id="1.10.10.60">
    <property type="entry name" value="Homeodomain-like"/>
    <property type="match status" value="1"/>
</dbReference>
<dbReference type="InterPro" id="IPR050877">
    <property type="entry name" value="EMX-VAX-Noto_Homeobox_TFs"/>
</dbReference>
<dbReference type="InterPro" id="IPR001356">
    <property type="entry name" value="HD"/>
</dbReference>
<dbReference type="InterPro" id="IPR020479">
    <property type="entry name" value="HD_metazoa"/>
</dbReference>
<dbReference type="InterPro" id="IPR017970">
    <property type="entry name" value="Homeobox_CS"/>
</dbReference>
<dbReference type="InterPro" id="IPR009057">
    <property type="entry name" value="Homeodomain-like_sf"/>
</dbReference>
<dbReference type="InterPro" id="IPR000047">
    <property type="entry name" value="HTH_motif"/>
</dbReference>
<dbReference type="PANTHER" id="PTHR24339">
    <property type="entry name" value="HOMEOBOX PROTEIN EMX-RELATED"/>
    <property type="match status" value="1"/>
</dbReference>
<dbReference type="PANTHER" id="PTHR24339:SF34">
    <property type="entry name" value="VENTRAL ANTERIOR HOMEOBOX 2"/>
    <property type="match status" value="1"/>
</dbReference>
<dbReference type="Pfam" id="PF00046">
    <property type="entry name" value="Homeodomain"/>
    <property type="match status" value="1"/>
</dbReference>
<dbReference type="PRINTS" id="PR00024">
    <property type="entry name" value="HOMEOBOX"/>
</dbReference>
<dbReference type="PRINTS" id="PR00031">
    <property type="entry name" value="HTHREPRESSR"/>
</dbReference>
<dbReference type="SMART" id="SM00389">
    <property type="entry name" value="HOX"/>
    <property type="match status" value="1"/>
</dbReference>
<dbReference type="SUPFAM" id="SSF46689">
    <property type="entry name" value="Homeodomain-like"/>
    <property type="match status" value="1"/>
</dbReference>
<dbReference type="PROSITE" id="PS00027">
    <property type="entry name" value="HOMEOBOX_1"/>
    <property type="match status" value="1"/>
</dbReference>
<dbReference type="PROSITE" id="PS50071">
    <property type="entry name" value="HOMEOBOX_2"/>
    <property type="match status" value="1"/>
</dbReference>
<keyword id="KW-0217">Developmental protein</keyword>
<keyword id="KW-0238">DNA-binding</keyword>
<keyword id="KW-0371">Homeobox</keyword>
<keyword id="KW-0539">Nucleus</keyword>
<keyword id="KW-1185">Reference proteome</keyword>
<keyword id="KW-0804">Transcription</keyword>
<keyword id="KW-0805">Transcription regulation</keyword>
<keyword id="KW-0879">Wnt signaling pathway</keyword>